<keyword id="KW-0998">Cell outer membrane</keyword>
<keyword id="KW-0133">Cell shape</keyword>
<keyword id="KW-0449">Lipoprotein</keyword>
<keyword id="KW-0472">Membrane</keyword>
<keyword id="KW-0564">Palmitate</keyword>
<keyword id="KW-0573">Peptidoglycan synthesis</keyword>
<keyword id="KW-1185">Reference proteome</keyword>
<keyword id="KW-0732">Signal</keyword>
<sequence length="189" mass="20675">MRRILFVALSVMFLAGCPSLPPEQPEPPTPVVPVTPSEKPTPPSEKVPEPPKMSAIDWESTVQPLVEQLVKAHGLENAKLLLVDTVKNNTNGALQTMQATDALRQAISSEHVFELIPQNQVQNARQSLGLSEEDSLGLRSKAIGLARYLNAEYVLYSIVSGNSDKRDIVMQLMLVKTGEILWSGHGDVK</sequence>
<reference key="1">
    <citation type="journal article" date="2003" name="Nat. Biotechnol.">
        <title>The genome sequence of the entomopathogenic bacterium Photorhabdus luminescens.</title>
        <authorList>
            <person name="Duchaud E."/>
            <person name="Rusniok C."/>
            <person name="Frangeul L."/>
            <person name="Buchrieser C."/>
            <person name="Givaudan A."/>
            <person name="Taourit S."/>
            <person name="Bocs S."/>
            <person name="Boursaux-Eude C."/>
            <person name="Chandler M."/>
            <person name="Charles J.-F."/>
            <person name="Dassa E."/>
            <person name="Derose R."/>
            <person name="Derzelle S."/>
            <person name="Freyssinet G."/>
            <person name="Gaudriault S."/>
            <person name="Medigue C."/>
            <person name="Lanois A."/>
            <person name="Powell K."/>
            <person name="Siguier P."/>
            <person name="Vincent R."/>
            <person name="Wingate V."/>
            <person name="Zouine M."/>
            <person name="Glaser P."/>
            <person name="Boemare N."/>
            <person name="Danchin A."/>
            <person name="Kunst F."/>
        </authorList>
    </citation>
    <scope>NUCLEOTIDE SEQUENCE [LARGE SCALE GENOMIC DNA]</scope>
    <source>
        <strain>DSM 15139 / CIP 105565 / TT01</strain>
    </source>
</reference>
<organism>
    <name type="scientific">Photorhabdus laumondii subsp. laumondii (strain DSM 15139 / CIP 105565 / TT01)</name>
    <name type="common">Photorhabdus luminescens subsp. laumondii</name>
    <dbReference type="NCBI Taxonomy" id="243265"/>
    <lineage>
        <taxon>Bacteria</taxon>
        <taxon>Pseudomonadati</taxon>
        <taxon>Pseudomonadota</taxon>
        <taxon>Gammaproteobacteria</taxon>
        <taxon>Enterobacterales</taxon>
        <taxon>Morganellaceae</taxon>
        <taxon>Photorhabdus</taxon>
    </lineage>
</organism>
<proteinExistence type="inferred from homology"/>
<dbReference type="EMBL" id="BX571868">
    <property type="protein sequence ID" value="CAE15198.1"/>
    <property type="molecule type" value="Genomic_DNA"/>
</dbReference>
<dbReference type="RefSeq" id="WP_011147044.1">
    <property type="nucleotide sequence ID" value="NC_005126.1"/>
</dbReference>
<dbReference type="SMR" id="Q7N395"/>
<dbReference type="STRING" id="243265.plu2824"/>
<dbReference type="GeneID" id="48849086"/>
<dbReference type="KEGG" id="plu:plu2824"/>
<dbReference type="eggNOG" id="COG3417">
    <property type="taxonomic scope" value="Bacteria"/>
</dbReference>
<dbReference type="HOGENOM" id="CLU_092328_0_0_6"/>
<dbReference type="OrthoDB" id="6466283at2"/>
<dbReference type="Proteomes" id="UP000002514">
    <property type="component" value="Chromosome"/>
</dbReference>
<dbReference type="GO" id="GO:0031241">
    <property type="term" value="C:periplasmic side of cell outer membrane"/>
    <property type="evidence" value="ECO:0007669"/>
    <property type="project" value="UniProtKB-UniRule"/>
</dbReference>
<dbReference type="GO" id="GO:0030234">
    <property type="term" value="F:enzyme regulator activity"/>
    <property type="evidence" value="ECO:0007669"/>
    <property type="project" value="UniProtKB-UniRule"/>
</dbReference>
<dbReference type="GO" id="GO:0009252">
    <property type="term" value="P:peptidoglycan biosynthetic process"/>
    <property type="evidence" value="ECO:0007669"/>
    <property type="project" value="UniProtKB-UniRule"/>
</dbReference>
<dbReference type="GO" id="GO:0008360">
    <property type="term" value="P:regulation of cell shape"/>
    <property type="evidence" value="ECO:0007669"/>
    <property type="project" value="UniProtKB-KW"/>
</dbReference>
<dbReference type="Gene3D" id="3.40.50.10610">
    <property type="entry name" value="ABC-type transport auxiliary lipoprotein component"/>
    <property type="match status" value="1"/>
</dbReference>
<dbReference type="HAMAP" id="MF_01889">
    <property type="entry name" value="LpoB"/>
    <property type="match status" value="1"/>
</dbReference>
<dbReference type="InterPro" id="IPR014094">
    <property type="entry name" value="LpoB"/>
</dbReference>
<dbReference type="NCBIfam" id="TIGR02722">
    <property type="entry name" value="lp"/>
    <property type="match status" value="1"/>
</dbReference>
<dbReference type="PANTHER" id="PTHR40593">
    <property type="entry name" value="PENICILLIN-BINDING PROTEIN ACTIVATOR LPOB"/>
    <property type="match status" value="1"/>
</dbReference>
<dbReference type="PANTHER" id="PTHR40593:SF1">
    <property type="entry name" value="PENICILLIN-BINDING PROTEIN ACTIVATOR LPOB"/>
    <property type="match status" value="1"/>
</dbReference>
<dbReference type="Pfam" id="PF13036">
    <property type="entry name" value="LpoB"/>
    <property type="match status" value="1"/>
</dbReference>
<dbReference type="PROSITE" id="PS51257">
    <property type="entry name" value="PROKAR_LIPOPROTEIN"/>
    <property type="match status" value="1"/>
</dbReference>
<protein>
    <recommendedName>
        <fullName evidence="1">Penicillin-binding protein activator LpoB</fullName>
        <shortName evidence="1">PBP activator LpoB</shortName>
    </recommendedName>
</protein>
<feature type="signal peptide" evidence="1">
    <location>
        <begin position="1"/>
        <end position="16"/>
    </location>
</feature>
<feature type="chain" id="PRO_0000405788" description="Penicillin-binding protein activator LpoB">
    <location>
        <begin position="17"/>
        <end position="189"/>
    </location>
</feature>
<feature type="region of interest" description="Disordered" evidence="2">
    <location>
        <begin position="18"/>
        <end position="52"/>
    </location>
</feature>
<feature type="compositionally biased region" description="Pro residues" evidence="2">
    <location>
        <begin position="19"/>
        <end position="45"/>
    </location>
</feature>
<feature type="lipid moiety-binding region" description="N-palmitoyl cysteine" evidence="1">
    <location>
        <position position="17"/>
    </location>
</feature>
<feature type="lipid moiety-binding region" description="S-diacylglycerol cysteine" evidence="1">
    <location>
        <position position="17"/>
    </location>
</feature>
<name>LPOB_PHOLL</name>
<comment type="function">
    <text evidence="1">Regulator of peptidoglycan synthesis that is essential for the function of penicillin-binding protein 1B (PBP1b).</text>
</comment>
<comment type="subunit">
    <text evidence="1">Interacts with PBP1b.</text>
</comment>
<comment type="subcellular location">
    <subcellularLocation>
        <location evidence="1">Cell outer membrane</location>
        <topology evidence="1">Lipid-anchor</topology>
        <orientation evidence="1">Periplasmic side</orientation>
    </subcellularLocation>
</comment>
<comment type="similarity">
    <text evidence="1">Belongs to the LpoB family.</text>
</comment>
<gene>
    <name evidence="1" type="primary">lpoB</name>
    <name type="ordered locus">plu2824</name>
</gene>
<accession>Q7N395</accession>
<evidence type="ECO:0000255" key="1">
    <source>
        <dbReference type="HAMAP-Rule" id="MF_01889"/>
    </source>
</evidence>
<evidence type="ECO:0000256" key="2">
    <source>
        <dbReference type="SAM" id="MobiDB-lite"/>
    </source>
</evidence>